<gene>
    <name evidence="1" type="primary">ndhC</name>
</gene>
<feature type="chain" id="PRO_0000362870" description="NAD(P)H-quinone oxidoreductase subunit 3, chloroplastic">
    <location>
        <begin position="1"/>
        <end position="120"/>
    </location>
</feature>
<feature type="transmembrane region" description="Helical" evidence="1">
    <location>
        <begin position="7"/>
        <end position="27"/>
    </location>
</feature>
<feature type="transmembrane region" description="Helical" evidence="1">
    <location>
        <begin position="64"/>
        <end position="84"/>
    </location>
</feature>
<feature type="transmembrane region" description="Helical" evidence="1">
    <location>
        <begin position="89"/>
        <end position="109"/>
    </location>
</feature>
<geneLocation type="chloroplast"/>
<name>NU3C_PSINU</name>
<reference key="1">
    <citation type="journal article" date="2004" name="Mol. Biol. Evol.">
        <title>Chloroplast phylogeny indicates that bryophytes are monophyletic.</title>
        <authorList>
            <person name="Nishiyama T."/>
            <person name="Wolf P.G."/>
            <person name="Kugita M."/>
            <person name="Sinclair R.B."/>
            <person name="Sugita M."/>
            <person name="Sugiura C."/>
            <person name="Wakasugi T."/>
            <person name="Yamada K."/>
            <person name="Yoshinaga K."/>
            <person name="Yamaguchi K."/>
            <person name="Ueda K."/>
            <person name="Hasebe M."/>
        </authorList>
    </citation>
    <scope>NUCLEOTIDE SEQUENCE [LARGE SCALE GENOMIC DNA]</scope>
    <source>
        <strain>Kingyoku</strain>
    </source>
</reference>
<dbReference type="EC" id="7.1.1.-" evidence="1"/>
<dbReference type="EMBL" id="AP004638">
    <property type="protein sequence ID" value="BAB84221.1"/>
    <property type="molecule type" value="Genomic_DNA"/>
</dbReference>
<dbReference type="RefSeq" id="NP_569634.1">
    <property type="nucleotide sequence ID" value="NC_003386.1"/>
</dbReference>
<dbReference type="SMR" id="Q8WI13"/>
<dbReference type="GeneID" id="2545117"/>
<dbReference type="GO" id="GO:0009535">
    <property type="term" value="C:chloroplast thylakoid membrane"/>
    <property type="evidence" value="ECO:0007669"/>
    <property type="project" value="UniProtKB-SubCell"/>
</dbReference>
<dbReference type="GO" id="GO:0030964">
    <property type="term" value="C:NADH dehydrogenase complex"/>
    <property type="evidence" value="ECO:0007669"/>
    <property type="project" value="TreeGrafter"/>
</dbReference>
<dbReference type="GO" id="GO:0008137">
    <property type="term" value="F:NADH dehydrogenase (ubiquinone) activity"/>
    <property type="evidence" value="ECO:0007669"/>
    <property type="project" value="InterPro"/>
</dbReference>
<dbReference type="GO" id="GO:0048038">
    <property type="term" value="F:quinone binding"/>
    <property type="evidence" value="ECO:0007669"/>
    <property type="project" value="UniProtKB-KW"/>
</dbReference>
<dbReference type="GO" id="GO:0019684">
    <property type="term" value="P:photosynthesis, light reaction"/>
    <property type="evidence" value="ECO:0007669"/>
    <property type="project" value="UniProtKB-UniRule"/>
</dbReference>
<dbReference type="FunFam" id="1.20.58.1610:FF:000001">
    <property type="entry name" value="NAD(P)H-quinone oxidoreductase subunit 3, chloroplastic"/>
    <property type="match status" value="1"/>
</dbReference>
<dbReference type="Gene3D" id="1.20.58.1610">
    <property type="entry name" value="NADH:ubiquinone/plastoquinone oxidoreductase, chain 3"/>
    <property type="match status" value="1"/>
</dbReference>
<dbReference type="HAMAP" id="MF_01394">
    <property type="entry name" value="NDH1_NuoA"/>
    <property type="match status" value="1"/>
</dbReference>
<dbReference type="InterPro" id="IPR023043">
    <property type="entry name" value="NAD(P)H_OxRDtase_bac/plastid"/>
</dbReference>
<dbReference type="InterPro" id="IPR000440">
    <property type="entry name" value="NADH_UbQ/plastoQ_OxRdtase_su3"/>
</dbReference>
<dbReference type="InterPro" id="IPR038430">
    <property type="entry name" value="NDAH_ubi_oxred_su3_sf"/>
</dbReference>
<dbReference type="PANTHER" id="PTHR11058">
    <property type="entry name" value="NADH-UBIQUINONE OXIDOREDUCTASE CHAIN 3"/>
    <property type="match status" value="1"/>
</dbReference>
<dbReference type="PANTHER" id="PTHR11058:SF9">
    <property type="entry name" value="NADH-UBIQUINONE OXIDOREDUCTASE CHAIN 3"/>
    <property type="match status" value="1"/>
</dbReference>
<dbReference type="Pfam" id="PF00507">
    <property type="entry name" value="Oxidored_q4"/>
    <property type="match status" value="1"/>
</dbReference>
<comment type="function">
    <text evidence="1">NDH shuttles electrons from NAD(P)H:plastoquinone, via FMN and iron-sulfur (Fe-S) centers, to quinones in the photosynthetic chain and possibly in a chloroplast respiratory chain. The immediate electron acceptor for the enzyme in this species is believed to be plastoquinone. Couples the redox reaction to proton translocation, and thus conserves the redox energy in a proton gradient.</text>
</comment>
<comment type="catalytic activity">
    <reaction evidence="1">
        <text>a plastoquinone + NADH + (n+1) H(+)(in) = a plastoquinol + NAD(+) + n H(+)(out)</text>
        <dbReference type="Rhea" id="RHEA:42608"/>
        <dbReference type="Rhea" id="RHEA-COMP:9561"/>
        <dbReference type="Rhea" id="RHEA-COMP:9562"/>
        <dbReference type="ChEBI" id="CHEBI:15378"/>
        <dbReference type="ChEBI" id="CHEBI:17757"/>
        <dbReference type="ChEBI" id="CHEBI:57540"/>
        <dbReference type="ChEBI" id="CHEBI:57945"/>
        <dbReference type="ChEBI" id="CHEBI:62192"/>
    </reaction>
</comment>
<comment type="catalytic activity">
    <reaction evidence="1">
        <text>a plastoquinone + NADPH + (n+1) H(+)(in) = a plastoquinol + NADP(+) + n H(+)(out)</text>
        <dbReference type="Rhea" id="RHEA:42612"/>
        <dbReference type="Rhea" id="RHEA-COMP:9561"/>
        <dbReference type="Rhea" id="RHEA-COMP:9562"/>
        <dbReference type="ChEBI" id="CHEBI:15378"/>
        <dbReference type="ChEBI" id="CHEBI:17757"/>
        <dbReference type="ChEBI" id="CHEBI:57783"/>
        <dbReference type="ChEBI" id="CHEBI:58349"/>
        <dbReference type="ChEBI" id="CHEBI:62192"/>
    </reaction>
</comment>
<comment type="subunit">
    <text evidence="1">NDH is composed of at least 16 different subunits, 5 of which are encoded in the nucleus.</text>
</comment>
<comment type="subcellular location">
    <subcellularLocation>
        <location evidence="1">Plastid</location>
        <location evidence="1">Chloroplast thylakoid membrane</location>
        <topology evidence="1">Multi-pass membrane protein</topology>
    </subcellularLocation>
</comment>
<comment type="similarity">
    <text evidence="1">Belongs to the complex I subunit 3 family.</text>
</comment>
<sequence length="120" mass="14117">MFMLPKYQTFWVFIMISSLIPLLALLISRLLAPVSKGPEKMTSYESGIEPMGDAWIQFQIRYYSFALVFVIFDVETVFLYPWAMSFYELGIFAFIEALIFVFILIIGLVYAWRKRALEWS</sequence>
<proteinExistence type="inferred from homology"/>
<organism>
    <name type="scientific">Psilotum nudum</name>
    <name type="common">Whisk fern</name>
    <name type="synonym">Lycopodium nudum</name>
    <dbReference type="NCBI Taxonomy" id="3240"/>
    <lineage>
        <taxon>Eukaryota</taxon>
        <taxon>Viridiplantae</taxon>
        <taxon>Streptophyta</taxon>
        <taxon>Embryophyta</taxon>
        <taxon>Tracheophyta</taxon>
        <taxon>Polypodiopsida</taxon>
        <taxon>Ophioglossidae</taxon>
        <taxon>Psilotales</taxon>
        <taxon>Psilotaceae</taxon>
        <taxon>Psilotum</taxon>
    </lineage>
</organism>
<keyword id="KW-0150">Chloroplast</keyword>
<keyword id="KW-0472">Membrane</keyword>
<keyword id="KW-0520">NAD</keyword>
<keyword id="KW-0521">NADP</keyword>
<keyword id="KW-0934">Plastid</keyword>
<keyword id="KW-0618">Plastoquinone</keyword>
<keyword id="KW-0874">Quinone</keyword>
<keyword id="KW-0793">Thylakoid</keyword>
<keyword id="KW-1278">Translocase</keyword>
<keyword id="KW-0812">Transmembrane</keyword>
<keyword id="KW-1133">Transmembrane helix</keyword>
<keyword id="KW-0813">Transport</keyword>
<evidence type="ECO:0000255" key="1">
    <source>
        <dbReference type="HAMAP-Rule" id="MF_01394"/>
    </source>
</evidence>
<protein>
    <recommendedName>
        <fullName evidence="1">NAD(P)H-quinone oxidoreductase subunit 3, chloroplastic</fullName>
        <ecNumber evidence="1">7.1.1.-</ecNumber>
    </recommendedName>
    <alternativeName>
        <fullName evidence="1">NAD(P)H dehydrogenase subunit 3</fullName>
    </alternativeName>
    <alternativeName>
        <fullName evidence="1">NADH-plastoquinone oxidoreductase subunit 3</fullName>
    </alternativeName>
</protein>
<accession>Q8WI13</accession>